<reference key="1">
    <citation type="journal article" date="2000" name="Development">
        <title>The Xenopus homologue of Bicaudal-C is a localized maternal mRNA that can induce endoderm formation.</title>
        <authorList>
            <person name="Wessely O."/>
            <person name="De Robertis E.M."/>
        </authorList>
    </citation>
    <scope>NUCLEOTIDE SEQUENCE [MRNA]</scope>
    <scope>FUNCTION</scope>
    <scope>DEVELOPMENTAL STAGE</scope>
    <source>
        <tissue>Yolk</tissue>
    </source>
</reference>
<dbReference type="EMBL" id="AF224746">
    <property type="protein sequence ID" value="AAF69826.1"/>
    <property type="molecule type" value="mRNA"/>
</dbReference>
<dbReference type="RefSeq" id="NP_001081996.1">
    <property type="nucleotide sequence ID" value="NM_001088527.1"/>
</dbReference>
<dbReference type="SMR" id="Q9IA00"/>
<dbReference type="GeneID" id="398169"/>
<dbReference type="KEGG" id="xla:398169"/>
<dbReference type="AGR" id="Xenbase:XB-GENE-6251921"/>
<dbReference type="CTD" id="398169"/>
<dbReference type="Xenbase" id="XB-GENE-6251921">
    <property type="gene designation" value="bicc1.S"/>
</dbReference>
<dbReference type="OrthoDB" id="271862at2759"/>
<dbReference type="Proteomes" id="UP000186698">
    <property type="component" value="Chromosome 7S"/>
</dbReference>
<dbReference type="Bgee" id="398169">
    <property type="expression patterns" value="Expressed in egg cell and 19 other cell types or tissues"/>
</dbReference>
<dbReference type="GO" id="GO:0005737">
    <property type="term" value="C:cytoplasm"/>
    <property type="evidence" value="ECO:0000318"/>
    <property type="project" value="GO_Central"/>
</dbReference>
<dbReference type="GO" id="GO:0003723">
    <property type="term" value="F:RNA binding"/>
    <property type="evidence" value="ECO:0007669"/>
    <property type="project" value="UniProtKB-KW"/>
</dbReference>
<dbReference type="CDD" id="cd22420">
    <property type="entry name" value="KH-I_BICC1_rpt1"/>
    <property type="match status" value="1"/>
</dbReference>
<dbReference type="CDD" id="cd22421">
    <property type="entry name" value="KH-I_BICC1_rpt2"/>
    <property type="match status" value="1"/>
</dbReference>
<dbReference type="CDD" id="cd22422">
    <property type="entry name" value="KH-I_BICC1_rpt3"/>
    <property type="match status" value="1"/>
</dbReference>
<dbReference type="CDD" id="cd09520">
    <property type="entry name" value="SAM_BICC1"/>
    <property type="match status" value="1"/>
</dbReference>
<dbReference type="FunFam" id="1.10.150.50:FF:000025">
    <property type="entry name" value="Ankyrin repeat and sterile alpha motif domain-containing 6"/>
    <property type="match status" value="1"/>
</dbReference>
<dbReference type="FunFam" id="3.30.310.270:FF:000002">
    <property type="entry name" value="BicC family RNA binding protein 1"/>
    <property type="match status" value="1"/>
</dbReference>
<dbReference type="Gene3D" id="3.30.310.270">
    <property type="match status" value="2"/>
</dbReference>
<dbReference type="Gene3D" id="3.30.1370.10">
    <property type="entry name" value="K Homology domain, type 1"/>
    <property type="match status" value="1"/>
</dbReference>
<dbReference type="Gene3D" id="1.10.150.50">
    <property type="entry name" value="Transcription Factor, Ets-1"/>
    <property type="match status" value="1"/>
</dbReference>
<dbReference type="InterPro" id="IPR054727">
    <property type="entry name" value="BICC1_KH"/>
</dbReference>
<dbReference type="InterPro" id="IPR047549">
    <property type="entry name" value="BICC1_KH-I_rpt1"/>
</dbReference>
<dbReference type="InterPro" id="IPR047554">
    <property type="entry name" value="BICC1_KH-I_rpt2"/>
</dbReference>
<dbReference type="InterPro" id="IPR047553">
    <property type="entry name" value="BICC1_KH-I_rpt3"/>
</dbReference>
<dbReference type="InterPro" id="IPR037974">
    <property type="entry name" value="BICC1_SAM_dom"/>
</dbReference>
<dbReference type="InterPro" id="IPR004087">
    <property type="entry name" value="KH_dom"/>
</dbReference>
<dbReference type="InterPro" id="IPR004088">
    <property type="entry name" value="KH_dom_type_1"/>
</dbReference>
<dbReference type="InterPro" id="IPR036612">
    <property type="entry name" value="KH_dom_type_1_sf"/>
</dbReference>
<dbReference type="InterPro" id="IPR001660">
    <property type="entry name" value="SAM"/>
</dbReference>
<dbReference type="InterPro" id="IPR013761">
    <property type="entry name" value="SAM/pointed_sf"/>
</dbReference>
<dbReference type="PANTHER" id="PTHR10627:SF78">
    <property type="entry name" value="PROTEIN BICAUDAL C HOMOLOG 1"/>
    <property type="match status" value="1"/>
</dbReference>
<dbReference type="PANTHER" id="PTHR10627">
    <property type="entry name" value="SCP160"/>
    <property type="match status" value="1"/>
</dbReference>
<dbReference type="Pfam" id="PF00013">
    <property type="entry name" value="KH_1"/>
    <property type="match status" value="2"/>
</dbReference>
<dbReference type="Pfam" id="PF22985">
    <property type="entry name" value="KH_BICC1"/>
    <property type="match status" value="2"/>
</dbReference>
<dbReference type="Pfam" id="PF24234">
    <property type="entry name" value="KH_BICC1_1st"/>
    <property type="match status" value="1"/>
</dbReference>
<dbReference type="Pfam" id="PF00536">
    <property type="entry name" value="SAM_1"/>
    <property type="match status" value="1"/>
</dbReference>
<dbReference type="SMART" id="SM00322">
    <property type="entry name" value="KH"/>
    <property type="match status" value="3"/>
</dbReference>
<dbReference type="SMART" id="SM00454">
    <property type="entry name" value="SAM"/>
    <property type="match status" value="1"/>
</dbReference>
<dbReference type="SUPFAM" id="SSF54791">
    <property type="entry name" value="Eukaryotic type KH-domain (KH-domain type I)"/>
    <property type="match status" value="3"/>
</dbReference>
<dbReference type="SUPFAM" id="SSF47769">
    <property type="entry name" value="SAM/Pointed domain"/>
    <property type="match status" value="1"/>
</dbReference>
<dbReference type="PROSITE" id="PS50084">
    <property type="entry name" value="KH_TYPE_1"/>
    <property type="match status" value="2"/>
</dbReference>
<dbReference type="PROSITE" id="PS50105">
    <property type="entry name" value="SAM_DOMAIN"/>
    <property type="match status" value="1"/>
</dbReference>
<feature type="chain" id="PRO_0000267716" description="Protein bicaudal C homolog 1-A">
    <location>
        <begin position="1"/>
        <end position="963"/>
    </location>
</feature>
<feature type="domain" description="KH 1" evidence="1">
    <location>
        <begin position="128"/>
        <end position="195"/>
    </location>
</feature>
<feature type="domain" description="KH 2" evidence="1">
    <location>
        <begin position="280"/>
        <end position="344"/>
    </location>
</feature>
<feature type="domain" description="SAM" evidence="2">
    <location>
        <begin position="862"/>
        <end position="925"/>
    </location>
</feature>
<feature type="region of interest" description="Disordered" evidence="3">
    <location>
        <begin position="1"/>
        <end position="48"/>
    </location>
</feature>
<feature type="region of interest" description="Disordered" evidence="3">
    <location>
        <begin position="592"/>
        <end position="613"/>
    </location>
</feature>
<feature type="region of interest" description="Disordered" evidence="3">
    <location>
        <begin position="668"/>
        <end position="713"/>
    </location>
</feature>
<feature type="region of interest" description="Disordered" evidence="3">
    <location>
        <begin position="767"/>
        <end position="834"/>
    </location>
</feature>
<feature type="compositionally biased region" description="Polar residues" evidence="3">
    <location>
        <begin position="12"/>
        <end position="22"/>
    </location>
</feature>
<feature type="compositionally biased region" description="Basic and acidic residues" evidence="3">
    <location>
        <begin position="35"/>
        <end position="48"/>
    </location>
</feature>
<feature type="compositionally biased region" description="Polar residues" evidence="3">
    <location>
        <begin position="592"/>
        <end position="601"/>
    </location>
</feature>
<feature type="compositionally biased region" description="Basic and acidic residues" evidence="3">
    <location>
        <begin position="602"/>
        <end position="612"/>
    </location>
</feature>
<feature type="compositionally biased region" description="Basic and acidic residues" evidence="3">
    <location>
        <begin position="683"/>
        <end position="696"/>
    </location>
</feature>
<feature type="compositionally biased region" description="Low complexity" evidence="3">
    <location>
        <begin position="784"/>
        <end position="797"/>
    </location>
</feature>
<feature type="compositionally biased region" description="Polar residues" evidence="3">
    <location>
        <begin position="812"/>
        <end position="824"/>
    </location>
</feature>
<organism>
    <name type="scientific">Xenopus laevis</name>
    <name type="common">African clawed frog</name>
    <dbReference type="NCBI Taxonomy" id="8355"/>
    <lineage>
        <taxon>Eukaryota</taxon>
        <taxon>Metazoa</taxon>
        <taxon>Chordata</taxon>
        <taxon>Craniata</taxon>
        <taxon>Vertebrata</taxon>
        <taxon>Euteleostomi</taxon>
        <taxon>Amphibia</taxon>
        <taxon>Batrachia</taxon>
        <taxon>Anura</taxon>
        <taxon>Pipoidea</taxon>
        <taxon>Pipidae</taxon>
        <taxon>Xenopodinae</taxon>
        <taxon>Xenopus</taxon>
        <taxon>Xenopus</taxon>
    </lineage>
</organism>
<protein>
    <recommendedName>
        <fullName>Protein bicaudal C homolog 1-A</fullName>
        <shortName>Bic-C-A</shortName>
    </recommendedName>
</protein>
<name>BIC1A_XENLA</name>
<sequence length="963" mass="105016">MAAQCESIGGDMNQSDPGSNSERSADSPVPGSEDDSPHDPEWREERFRVDRKKLETMLQAAAEGKGKSGEDFFQKIMEETNTQIAWPSKLKIGAKSKKDPHIKVSGKKENVKEAKERIMSVLDTKSNRVTLKMDVLHTEHSHVIGKGGNNIKKVMEETGCHIHFPDSNRNNQAEKSNQVSIAGQPAGVESARVRIRELLPLVLMFELPIAGILQPIPDPNSPTIQQISQTYNLTVSFKQRSRVYGATVIVRGSQNNTSAVKEGTAMLLEHLAGSLATAIPVSTQLDIAAQHHLFMMGRNGCNIKHIMQRTGAQIHFPDPNNPLKKSTVYLQGTIDSVCLARQYLMGCLPLVLMFDMKEEIEIEPQCITQLMEQLDVFISIKPKPKQPSKSVIVKSVERNALNMYEARKCLLGLDSSGVTVTNQSTLSCPVPMNCHGLDILAAGLGLSGLGLLGPNTLSVNSTTAQNSLLNALNSSLSPLHSPSSAAPSPTLWAASLANNATGFSAIPHLMIPSAAQATLTNFLLSGVPNYGQNTPSPPPGLTPVDVHMNGIHSECKKVTSALNGHVKPTNMKYGTISSSSLGDKVLNTNLAEASRQSNNHSSAEEVNSKTDPEGCNDAFVEVGMPRSPSHSANTKDLKQMLNSTKAPCPTRQTVKLLHGTKNSHLHGERLLSDSEMSPMEGPVTDKKAPGSERAAERAAAQQNSERARLTSQSEYGTMQAYDYEQKKLLATKAMLKKPVVTEVRTPTNTWSGLGFSKSTPAETIKELRRANHVPYKPTMTTTYENSSLSRSNSREQLGNGSDSENWRERNGIDSSQNDYSSSIGSPKRKQNKSAEHYLSSSNYMDCISSLTGSNGCNLNSSFKGSDLPELFSKLGLGKYTDIFQQQEIDLQTFLTLTDQDLKELGISTFGARRKMLLAISELNKNRRKLFEPTNIRASFLEGGASGRLPRQYHTDIASVSGRW</sequence>
<proteinExistence type="evidence at transcript level"/>
<gene>
    <name type="primary">bicc1-a</name>
</gene>
<accession>Q9IA00</accession>
<comment type="function">
    <text evidence="4">Putative RNA-binding protein. May be involved in regulating gene expression during embryonic development. Seems to be involved in endoderm formation. Ectopic expression results in endoderm formation in the absence of mesoderm induction.</text>
</comment>
<comment type="developmental stage">
    <text evidence="4">Is enriched in the vegetal half of the oocyte. In stage II oocytes is present uniformly in the cytoplasm; at stage III, it is concentrated towards the vegetal pole and finally clearly accumulates in the vegetal cortex by stage IV and V. It is expressed throughout the oocyte cytoplasm, forming a vegetal-to-animal gradient. After fertilization, persists in the yolky endodermal cells until mid-blastula-transition (MBT). At MBT, is abundant in the large endodermal cells. By the gastrula stage, this endodermal core is found in the center of the embryo. At stage 12, is also independently expressed in the late dorsal blastopore lip. This expression continues in the midline of the neural tube and finally regresses to the tip of the tail. At stage 30 expressed in the floorplate. At tailbud stage, expression is also detected in the pronephros and pronephric duct.</text>
</comment>
<comment type="similarity">
    <text evidence="5">Belongs to the BicC family.</text>
</comment>
<keyword id="KW-0217">Developmental protein</keyword>
<keyword id="KW-1185">Reference proteome</keyword>
<keyword id="KW-0677">Repeat</keyword>
<keyword id="KW-0694">RNA-binding</keyword>
<evidence type="ECO:0000255" key="1">
    <source>
        <dbReference type="PROSITE-ProRule" id="PRU00117"/>
    </source>
</evidence>
<evidence type="ECO:0000255" key="2">
    <source>
        <dbReference type="PROSITE-ProRule" id="PRU00184"/>
    </source>
</evidence>
<evidence type="ECO:0000256" key="3">
    <source>
        <dbReference type="SAM" id="MobiDB-lite"/>
    </source>
</evidence>
<evidence type="ECO:0000269" key="4">
    <source>
    </source>
</evidence>
<evidence type="ECO:0000305" key="5"/>